<comment type="subcellular location">
    <subcellularLocation>
        <location evidence="1">Cytoplasm</location>
    </subcellularLocation>
</comment>
<comment type="similarity">
    <text evidence="1">Belongs to the UPF0294 family.</text>
</comment>
<reference key="1">
    <citation type="journal article" date="2011" name="J. Bacteriol.">
        <title>Comparative genomics of 28 Salmonella enterica isolates: evidence for CRISPR-mediated adaptive sublineage evolution.</title>
        <authorList>
            <person name="Fricke W.F."/>
            <person name="Mammel M.K."/>
            <person name="McDermott P.F."/>
            <person name="Tartera C."/>
            <person name="White D.G."/>
            <person name="Leclerc J.E."/>
            <person name="Ravel J."/>
            <person name="Cebula T.A."/>
        </authorList>
    </citation>
    <scope>NUCLEOTIDE SEQUENCE [LARGE SCALE GENOMIC DNA]</scope>
    <source>
        <strain>SL483</strain>
    </source>
</reference>
<name>YAFD_SALA4</name>
<gene>
    <name evidence="1" type="primary">yafD</name>
    <name type="ordered locus">SeAg_B0302</name>
</gene>
<proteinExistence type="inferred from homology"/>
<evidence type="ECO:0000255" key="1">
    <source>
        <dbReference type="HAMAP-Rule" id="MF_01119"/>
    </source>
</evidence>
<protein>
    <recommendedName>
        <fullName evidence="1">UPF0294 protein YafD</fullName>
    </recommendedName>
</protein>
<keyword id="KW-0963">Cytoplasm</keyword>
<dbReference type="EMBL" id="CP001138">
    <property type="protein sequence ID" value="ACH49705.1"/>
    <property type="molecule type" value="Genomic_DNA"/>
</dbReference>
<dbReference type="RefSeq" id="WP_001230970.1">
    <property type="nucleotide sequence ID" value="NC_011149.1"/>
</dbReference>
<dbReference type="SMR" id="B5F8W7"/>
<dbReference type="KEGG" id="sea:SeAg_B0302"/>
<dbReference type="HOGENOM" id="CLU_083563_0_0_6"/>
<dbReference type="Proteomes" id="UP000008819">
    <property type="component" value="Chromosome"/>
</dbReference>
<dbReference type="GO" id="GO:0005737">
    <property type="term" value="C:cytoplasm"/>
    <property type="evidence" value="ECO:0007669"/>
    <property type="project" value="UniProtKB-SubCell"/>
</dbReference>
<dbReference type="GO" id="GO:0003824">
    <property type="term" value="F:catalytic activity"/>
    <property type="evidence" value="ECO:0007669"/>
    <property type="project" value="InterPro"/>
</dbReference>
<dbReference type="Gene3D" id="3.60.10.10">
    <property type="entry name" value="Endonuclease/exonuclease/phosphatase"/>
    <property type="match status" value="1"/>
</dbReference>
<dbReference type="HAMAP" id="MF_01119">
    <property type="entry name" value="UPF0294"/>
    <property type="match status" value="1"/>
</dbReference>
<dbReference type="InterPro" id="IPR036691">
    <property type="entry name" value="Endo/exonu/phosph_ase_sf"/>
</dbReference>
<dbReference type="InterPro" id="IPR005135">
    <property type="entry name" value="Endo/exonuclease/phosphatase"/>
</dbReference>
<dbReference type="InterPro" id="IPR022958">
    <property type="entry name" value="UPF0294"/>
</dbReference>
<dbReference type="NCBIfam" id="NF003839">
    <property type="entry name" value="PRK05421.1-1"/>
    <property type="match status" value="1"/>
</dbReference>
<dbReference type="NCBIfam" id="NF003840">
    <property type="entry name" value="PRK05421.1-2"/>
    <property type="match status" value="1"/>
</dbReference>
<dbReference type="NCBIfam" id="NF003841">
    <property type="entry name" value="PRK05421.1-3"/>
    <property type="match status" value="1"/>
</dbReference>
<dbReference type="NCBIfam" id="NF003842">
    <property type="entry name" value="PRK05421.1-4"/>
    <property type="match status" value="1"/>
</dbReference>
<dbReference type="Pfam" id="PF03372">
    <property type="entry name" value="Exo_endo_phos"/>
    <property type="match status" value="1"/>
</dbReference>
<dbReference type="SUPFAM" id="SSF56219">
    <property type="entry name" value="DNase I-like"/>
    <property type="match status" value="1"/>
</dbReference>
<organism>
    <name type="scientific">Salmonella agona (strain SL483)</name>
    <dbReference type="NCBI Taxonomy" id="454166"/>
    <lineage>
        <taxon>Bacteria</taxon>
        <taxon>Pseudomonadati</taxon>
        <taxon>Pseudomonadota</taxon>
        <taxon>Gammaproteobacteria</taxon>
        <taxon>Enterobacterales</taxon>
        <taxon>Enterobacteriaceae</taxon>
        <taxon>Salmonella</taxon>
    </lineage>
</organism>
<feature type="chain" id="PRO_1000137247" description="UPF0294 protein YafD">
    <location>
        <begin position="1"/>
        <end position="266"/>
    </location>
</feature>
<sequence>MRKNTYAMRYVAGQPAERILPPGSFASIGQALPAGEPLSSEERIRILVWNIFKQQRAEWLSVLKNYGKDAHLVLLQEAQTTPELVQFATANYLAADQVPAFVLPQHPSGVMTLSAAHPVYCCPLREREPILRLAKSALVTVYPLPDTRLLMVVNVHAVNFSLGVDVYSKQLLPIGDQIAHHSGPVIMAGDFNAWSRPRMNALYRFAREMSLRQVRFTDDQRRRAFGRPLDFVFYRGLNVNEASVLVTRASDHNPLLVEFSPGKPEQ</sequence>
<accession>B5F8W7</accession>